<protein>
    <recommendedName>
        <fullName>L-lactate dehydrogenase A</fullName>
        <shortName>L-LDH A</shortName>
        <ecNumber>1.1.1.27</ecNumber>
    </recommendedName>
</protein>
<organism>
    <name type="scientific">Rhizopus oryzae</name>
    <name type="common">Mucormycosis agent</name>
    <name type="synonym">Rhizopus arrhizus var. delemar</name>
    <dbReference type="NCBI Taxonomy" id="64495"/>
    <lineage>
        <taxon>Eukaryota</taxon>
        <taxon>Fungi</taxon>
        <taxon>Fungi incertae sedis</taxon>
        <taxon>Mucoromycota</taxon>
        <taxon>Mucoromycotina</taxon>
        <taxon>Mucoromycetes</taxon>
        <taxon>Mucorales</taxon>
        <taxon>Mucorineae</taxon>
        <taxon>Rhizopodaceae</taxon>
        <taxon>Rhizopus</taxon>
    </lineage>
</organism>
<keyword id="KW-0963">Cytoplasm</keyword>
<keyword id="KW-0520">NAD</keyword>
<keyword id="KW-0560">Oxidoreductase</keyword>
<gene>
    <name type="primary">LDHA</name>
</gene>
<reference key="1">
    <citation type="journal article" date="2000" name="Appl. Environ. Microbiol.">
        <title>Isolation and expression of lactate dehydrogenase genes from Rhizopus oryzae.</title>
        <authorList>
            <person name="Skory C.D."/>
        </authorList>
    </citation>
    <scope>NUCLEOTIDE SEQUENCE [GENOMIC DNA]</scope>
    <source>
        <strain>ATCC 9363 / NRRL 395</strain>
    </source>
</reference>
<comment type="function">
    <text>Converts pyruvate to lactate.</text>
</comment>
<comment type="catalytic activity">
    <reaction evidence="2">
        <text>(S)-lactate + NAD(+) = pyruvate + NADH + H(+)</text>
        <dbReference type="Rhea" id="RHEA:23444"/>
        <dbReference type="ChEBI" id="CHEBI:15361"/>
        <dbReference type="ChEBI" id="CHEBI:15378"/>
        <dbReference type="ChEBI" id="CHEBI:16651"/>
        <dbReference type="ChEBI" id="CHEBI:57540"/>
        <dbReference type="ChEBI" id="CHEBI:57945"/>
        <dbReference type="EC" id="1.1.1.27"/>
    </reaction>
</comment>
<comment type="pathway">
    <text>Fermentation; pyruvate fermentation to lactate; (S)-lactate from pyruvate: step 1/1.</text>
</comment>
<comment type="subunit">
    <text evidence="1">Homotetramer.</text>
</comment>
<comment type="subcellular location">
    <subcellularLocation>
        <location evidence="1">Cytoplasm</location>
    </subcellularLocation>
</comment>
<comment type="similarity">
    <text evidence="3">Belongs to the LDH/MDH superfamily. LDH family.</text>
</comment>
<evidence type="ECO:0000250" key="1"/>
<evidence type="ECO:0000255" key="2">
    <source>
        <dbReference type="PROSITE-ProRule" id="PRU10002"/>
    </source>
</evidence>
<evidence type="ECO:0000305" key="3"/>
<name>LDHA_RHIOR</name>
<sequence>MVLHSKVAIVGAGAVGASTAYALMFKNICTEIIIVDVNPDIVQAQVLDLADAASISHTPIRAGSAEEAGQADIVVITAGAKQREGEPRTKLIERNFRVLQSIIGGMQPIRPDAVILVVANPVDILTHIAKTLSGLPPNQVIGSGTYLDTTRLRVHLGDVFDVNPQSVHAFVLGEHGDSQMIAWEAASIGGQPLTSFPEFAKLDKTAISKAISGKAMEIIRLKGATFYGIGACAADLVHTIMLNRKSVHPVSVYVEKYGATFSMPAKLGWRGVEQIYEVPLTEEEEALLVKSVEALKSVEYSSTKVPEKKVHATSFSKSSC</sequence>
<accession>Q9P4B6</accession>
<proteinExistence type="inferred from homology"/>
<feature type="chain" id="PRO_0000168498" description="L-lactate dehydrogenase A">
    <location>
        <begin position="1"/>
        <end position="320"/>
    </location>
</feature>
<feature type="active site" description="Proton acceptor" evidence="2">
    <location>
        <position position="175"/>
    </location>
</feature>
<feature type="binding site" evidence="1">
    <location>
        <position position="88"/>
    </location>
    <ligand>
        <name>substrate</name>
    </ligand>
</feature>
<feature type="binding site" evidence="1">
    <location>
        <position position="120"/>
    </location>
    <ligand>
        <name>NAD(+)</name>
        <dbReference type="ChEBI" id="CHEBI:57540"/>
    </ligand>
</feature>
<feature type="binding site" evidence="1">
    <location>
        <position position="120"/>
    </location>
    <ligand>
        <name>substrate</name>
    </ligand>
</feature>
<feature type="binding site" evidence="1">
    <location>
        <position position="151"/>
    </location>
    <ligand>
        <name>substrate</name>
    </ligand>
</feature>
<dbReference type="EC" id="1.1.1.27"/>
<dbReference type="EMBL" id="AF226154">
    <property type="protein sequence ID" value="AAF74436.1"/>
    <property type="molecule type" value="Genomic_DNA"/>
</dbReference>
<dbReference type="SMR" id="Q9P4B6"/>
<dbReference type="OrthoDB" id="6270329at2759"/>
<dbReference type="UniPathway" id="UPA00554">
    <property type="reaction ID" value="UER00611"/>
</dbReference>
<dbReference type="GO" id="GO:0005737">
    <property type="term" value="C:cytoplasm"/>
    <property type="evidence" value="ECO:0007669"/>
    <property type="project" value="UniProtKB-SubCell"/>
</dbReference>
<dbReference type="GO" id="GO:0004459">
    <property type="term" value="F:L-lactate dehydrogenase activity"/>
    <property type="evidence" value="ECO:0007669"/>
    <property type="project" value="UniProtKB-EC"/>
</dbReference>
<dbReference type="GO" id="GO:0006089">
    <property type="term" value="P:lactate metabolic process"/>
    <property type="evidence" value="ECO:0007669"/>
    <property type="project" value="TreeGrafter"/>
</dbReference>
<dbReference type="CDD" id="cd00300">
    <property type="entry name" value="LDH_like"/>
    <property type="match status" value="1"/>
</dbReference>
<dbReference type="Gene3D" id="3.90.110.10">
    <property type="entry name" value="Lactate dehydrogenase/glycoside hydrolase, family 4, C-terminal"/>
    <property type="match status" value="1"/>
</dbReference>
<dbReference type="Gene3D" id="3.40.50.720">
    <property type="entry name" value="NAD(P)-binding Rossmann-like Domain"/>
    <property type="match status" value="1"/>
</dbReference>
<dbReference type="InterPro" id="IPR001557">
    <property type="entry name" value="L-lactate/malate_DH"/>
</dbReference>
<dbReference type="InterPro" id="IPR011304">
    <property type="entry name" value="L-lactate_DH"/>
</dbReference>
<dbReference type="InterPro" id="IPR018177">
    <property type="entry name" value="L-lactate_DH_AS"/>
</dbReference>
<dbReference type="InterPro" id="IPR022383">
    <property type="entry name" value="Lactate/malate_DH_C"/>
</dbReference>
<dbReference type="InterPro" id="IPR001236">
    <property type="entry name" value="Lactate/malate_DH_N"/>
</dbReference>
<dbReference type="InterPro" id="IPR015955">
    <property type="entry name" value="Lactate_DH/Glyco_Ohase_4_C"/>
</dbReference>
<dbReference type="InterPro" id="IPR036291">
    <property type="entry name" value="NAD(P)-bd_dom_sf"/>
</dbReference>
<dbReference type="NCBIfam" id="TIGR01771">
    <property type="entry name" value="L-LDH-NAD"/>
    <property type="match status" value="1"/>
</dbReference>
<dbReference type="PANTHER" id="PTHR43128">
    <property type="entry name" value="L-2-HYDROXYCARBOXYLATE DEHYDROGENASE (NAD(P)(+))"/>
    <property type="match status" value="1"/>
</dbReference>
<dbReference type="PANTHER" id="PTHR43128:SF16">
    <property type="entry name" value="L-LACTATE DEHYDROGENASE"/>
    <property type="match status" value="1"/>
</dbReference>
<dbReference type="Pfam" id="PF02866">
    <property type="entry name" value="Ldh_1_C"/>
    <property type="match status" value="1"/>
</dbReference>
<dbReference type="Pfam" id="PF00056">
    <property type="entry name" value="Ldh_1_N"/>
    <property type="match status" value="1"/>
</dbReference>
<dbReference type="PIRSF" id="PIRSF000102">
    <property type="entry name" value="Lac_mal_DH"/>
    <property type="match status" value="1"/>
</dbReference>
<dbReference type="PRINTS" id="PR00086">
    <property type="entry name" value="LLDHDRGNASE"/>
</dbReference>
<dbReference type="SUPFAM" id="SSF56327">
    <property type="entry name" value="LDH C-terminal domain-like"/>
    <property type="match status" value="1"/>
</dbReference>
<dbReference type="SUPFAM" id="SSF51735">
    <property type="entry name" value="NAD(P)-binding Rossmann-fold domains"/>
    <property type="match status" value="1"/>
</dbReference>
<dbReference type="PROSITE" id="PS00064">
    <property type="entry name" value="L_LDH"/>
    <property type="match status" value="1"/>
</dbReference>